<comment type="function">
    <text evidence="1">Functions in the N-end rule pathway of protein degradation where it conjugates Leu, Phe and, less efficiently, Met from aminoacyl-tRNAs to the N-termini of proteins containing an N-terminal arginine or lysine.</text>
</comment>
<comment type="catalytic activity">
    <reaction evidence="1">
        <text>N-terminal L-lysyl-[protein] + L-leucyl-tRNA(Leu) = N-terminal L-leucyl-L-lysyl-[protein] + tRNA(Leu) + H(+)</text>
        <dbReference type="Rhea" id="RHEA:12340"/>
        <dbReference type="Rhea" id="RHEA-COMP:9613"/>
        <dbReference type="Rhea" id="RHEA-COMP:9622"/>
        <dbReference type="Rhea" id="RHEA-COMP:12670"/>
        <dbReference type="Rhea" id="RHEA-COMP:12671"/>
        <dbReference type="ChEBI" id="CHEBI:15378"/>
        <dbReference type="ChEBI" id="CHEBI:65249"/>
        <dbReference type="ChEBI" id="CHEBI:78442"/>
        <dbReference type="ChEBI" id="CHEBI:78494"/>
        <dbReference type="ChEBI" id="CHEBI:133043"/>
        <dbReference type="EC" id="2.3.2.6"/>
    </reaction>
</comment>
<comment type="catalytic activity">
    <reaction evidence="1">
        <text>N-terminal L-arginyl-[protein] + L-leucyl-tRNA(Leu) = N-terminal L-leucyl-L-arginyl-[protein] + tRNA(Leu) + H(+)</text>
        <dbReference type="Rhea" id="RHEA:50416"/>
        <dbReference type="Rhea" id="RHEA-COMP:9613"/>
        <dbReference type="Rhea" id="RHEA-COMP:9622"/>
        <dbReference type="Rhea" id="RHEA-COMP:12672"/>
        <dbReference type="Rhea" id="RHEA-COMP:12673"/>
        <dbReference type="ChEBI" id="CHEBI:15378"/>
        <dbReference type="ChEBI" id="CHEBI:64719"/>
        <dbReference type="ChEBI" id="CHEBI:78442"/>
        <dbReference type="ChEBI" id="CHEBI:78494"/>
        <dbReference type="ChEBI" id="CHEBI:133044"/>
        <dbReference type="EC" id="2.3.2.6"/>
    </reaction>
</comment>
<comment type="catalytic activity">
    <reaction evidence="1">
        <text>L-phenylalanyl-tRNA(Phe) + an N-terminal L-alpha-aminoacyl-[protein] = an N-terminal L-phenylalanyl-L-alpha-aminoacyl-[protein] + tRNA(Phe)</text>
        <dbReference type="Rhea" id="RHEA:43632"/>
        <dbReference type="Rhea" id="RHEA-COMP:9668"/>
        <dbReference type="Rhea" id="RHEA-COMP:9699"/>
        <dbReference type="Rhea" id="RHEA-COMP:10636"/>
        <dbReference type="Rhea" id="RHEA-COMP:10637"/>
        <dbReference type="ChEBI" id="CHEBI:78442"/>
        <dbReference type="ChEBI" id="CHEBI:78531"/>
        <dbReference type="ChEBI" id="CHEBI:78597"/>
        <dbReference type="ChEBI" id="CHEBI:83561"/>
        <dbReference type="EC" id="2.3.2.6"/>
    </reaction>
</comment>
<comment type="subcellular location">
    <subcellularLocation>
        <location evidence="1">Cytoplasm</location>
    </subcellularLocation>
</comment>
<comment type="similarity">
    <text evidence="1">Belongs to the L/F-transferase family.</text>
</comment>
<name>LFTR_BURVG</name>
<sequence>MVPWLDPNDPFPPVERALGPATGAPGLLAASADLLPSRLIDAYLRGIFPWYSDGQPVLWWSPDPRMILAPAEFKVSPSLRKTLKRVLRDAAWEVRVDHDFAGVMRACAQAPRRGQRGTWITAEIIDAYTSLHRSGNAHSIETWHDGRRVGGLYGVAFGRMFFGESMYADATDASKIALATLVAHLRDQGLEMIDCQQNTSHLASLGGREIARKAFVAHVRRAAAEPPIPWQFDKRALAALTGPAGAAAPRGIER</sequence>
<evidence type="ECO:0000255" key="1">
    <source>
        <dbReference type="HAMAP-Rule" id="MF_00688"/>
    </source>
</evidence>
<keyword id="KW-0012">Acyltransferase</keyword>
<keyword id="KW-0963">Cytoplasm</keyword>
<keyword id="KW-0808">Transferase</keyword>
<proteinExistence type="inferred from homology"/>
<reference key="1">
    <citation type="submission" date="2007-03" db="EMBL/GenBank/DDBJ databases">
        <title>Complete sequence of chromosome 1 of Burkholderia vietnamiensis G4.</title>
        <authorList>
            <consortium name="US DOE Joint Genome Institute"/>
            <person name="Copeland A."/>
            <person name="Lucas S."/>
            <person name="Lapidus A."/>
            <person name="Barry K."/>
            <person name="Detter J.C."/>
            <person name="Glavina del Rio T."/>
            <person name="Hammon N."/>
            <person name="Israni S."/>
            <person name="Dalin E."/>
            <person name="Tice H."/>
            <person name="Pitluck S."/>
            <person name="Chain P."/>
            <person name="Malfatti S."/>
            <person name="Shin M."/>
            <person name="Vergez L."/>
            <person name="Schmutz J."/>
            <person name="Larimer F."/>
            <person name="Land M."/>
            <person name="Hauser L."/>
            <person name="Kyrpides N."/>
            <person name="Tiedje J."/>
            <person name="Richardson P."/>
        </authorList>
    </citation>
    <scope>NUCLEOTIDE SEQUENCE [LARGE SCALE GENOMIC DNA]</scope>
    <source>
        <strain>G4 / LMG 22486</strain>
    </source>
</reference>
<gene>
    <name evidence="1" type="primary">aat</name>
    <name type="ordered locus">Bcep1808_1520</name>
</gene>
<feature type="chain" id="PRO_1000045102" description="Leucyl/phenylalanyl-tRNA--protein transferase">
    <location>
        <begin position="1"/>
        <end position="254"/>
    </location>
</feature>
<dbReference type="EC" id="2.3.2.6" evidence="1"/>
<dbReference type="EMBL" id="CP000614">
    <property type="protein sequence ID" value="ABO54527.1"/>
    <property type="molecule type" value="Genomic_DNA"/>
</dbReference>
<dbReference type="SMR" id="A4JE24"/>
<dbReference type="KEGG" id="bvi:Bcep1808_1520"/>
<dbReference type="eggNOG" id="COG2360">
    <property type="taxonomic scope" value="Bacteria"/>
</dbReference>
<dbReference type="HOGENOM" id="CLU_075045_0_0_4"/>
<dbReference type="Proteomes" id="UP000002287">
    <property type="component" value="Chromosome 1"/>
</dbReference>
<dbReference type="GO" id="GO:0005737">
    <property type="term" value="C:cytoplasm"/>
    <property type="evidence" value="ECO:0007669"/>
    <property type="project" value="UniProtKB-SubCell"/>
</dbReference>
<dbReference type="GO" id="GO:0008914">
    <property type="term" value="F:leucyl-tRNA--protein transferase activity"/>
    <property type="evidence" value="ECO:0007669"/>
    <property type="project" value="UniProtKB-UniRule"/>
</dbReference>
<dbReference type="GO" id="GO:0030163">
    <property type="term" value="P:protein catabolic process"/>
    <property type="evidence" value="ECO:0007669"/>
    <property type="project" value="UniProtKB-UniRule"/>
</dbReference>
<dbReference type="Gene3D" id="3.40.630.70">
    <property type="entry name" value="Leucyl/phenylalanyl-tRNA-protein transferase, C-terminal domain"/>
    <property type="match status" value="1"/>
</dbReference>
<dbReference type="Gene3D" id="3.30.70.3550">
    <property type="entry name" value="Leucyl/phenylalanyl-tRNA-protein transferase, N-terminal domain"/>
    <property type="match status" value="1"/>
</dbReference>
<dbReference type="HAMAP" id="MF_00688">
    <property type="entry name" value="Leu_Phe_trans"/>
    <property type="match status" value="1"/>
</dbReference>
<dbReference type="InterPro" id="IPR016181">
    <property type="entry name" value="Acyl_CoA_acyltransferase"/>
</dbReference>
<dbReference type="InterPro" id="IPR004616">
    <property type="entry name" value="Leu/Phe-tRNA_Trfase"/>
</dbReference>
<dbReference type="InterPro" id="IPR042203">
    <property type="entry name" value="Leu/Phe-tRNA_Trfase_C"/>
</dbReference>
<dbReference type="InterPro" id="IPR042221">
    <property type="entry name" value="Leu/Phe-tRNA_Trfase_N"/>
</dbReference>
<dbReference type="NCBIfam" id="TIGR00667">
    <property type="entry name" value="aat"/>
    <property type="match status" value="1"/>
</dbReference>
<dbReference type="PANTHER" id="PTHR30098">
    <property type="entry name" value="LEUCYL/PHENYLALANYL-TRNA--PROTEIN TRANSFERASE"/>
    <property type="match status" value="1"/>
</dbReference>
<dbReference type="PANTHER" id="PTHR30098:SF2">
    <property type="entry name" value="LEUCYL_PHENYLALANYL-TRNA--PROTEIN TRANSFERASE"/>
    <property type="match status" value="1"/>
</dbReference>
<dbReference type="Pfam" id="PF03588">
    <property type="entry name" value="Leu_Phe_trans"/>
    <property type="match status" value="1"/>
</dbReference>
<dbReference type="SUPFAM" id="SSF55729">
    <property type="entry name" value="Acyl-CoA N-acyltransferases (Nat)"/>
    <property type="match status" value="1"/>
</dbReference>
<organism>
    <name type="scientific">Burkholderia vietnamiensis (strain G4 / LMG 22486)</name>
    <name type="common">Burkholderia cepacia (strain R1808)</name>
    <dbReference type="NCBI Taxonomy" id="269482"/>
    <lineage>
        <taxon>Bacteria</taxon>
        <taxon>Pseudomonadati</taxon>
        <taxon>Pseudomonadota</taxon>
        <taxon>Betaproteobacteria</taxon>
        <taxon>Burkholderiales</taxon>
        <taxon>Burkholderiaceae</taxon>
        <taxon>Burkholderia</taxon>
        <taxon>Burkholderia cepacia complex</taxon>
    </lineage>
</organism>
<protein>
    <recommendedName>
        <fullName evidence="1">Leucyl/phenylalanyl-tRNA--protein transferase</fullName>
        <ecNumber evidence="1">2.3.2.6</ecNumber>
    </recommendedName>
    <alternativeName>
        <fullName evidence="1">L/F-transferase</fullName>
    </alternativeName>
    <alternativeName>
        <fullName evidence="1">Leucyltransferase</fullName>
    </alternativeName>
    <alternativeName>
        <fullName evidence="1">Phenyalanyltransferase</fullName>
    </alternativeName>
</protein>
<accession>A4JE24</accession>